<organism>
    <name type="scientific">Arabidopsis thaliana</name>
    <name type="common">Mouse-ear cress</name>
    <dbReference type="NCBI Taxonomy" id="3702"/>
    <lineage>
        <taxon>Eukaryota</taxon>
        <taxon>Viridiplantae</taxon>
        <taxon>Streptophyta</taxon>
        <taxon>Embryophyta</taxon>
        <taxon>Tracheophyta</taxon>
        <taxon>Spermatophyta</taxon>
        <taxon>Magnoliopsida</taxon>
        <taxon>eudicotyledons</taxon>
        <taxon>Gunneridae</taxon>
        <taxon>Pentapetalae</taxon>
        <taxon>rosids</taxon>
        <taxon>malvids</taxon>
        <taxon>Brassicales</taxon>
        <taxon>Brassicaceae</taxon>
        <taxon>Camelineae</taxon>
        <taxon>Arabidopsis</taxon>
    </lineage>
</organism>
<evidence type="ECO:0000255" key="1">
    <source>
        <dbReference type="PROSITE-ProRule" id="PRU00625"/>
    </source>
</evidence>
<evidence type="ECO:0000256" key="2">
    <source>
        <dbReference type="SAM" id="MobiDB-lite"/>
    </source>
</evidence>
<evidence type="ECO:0000269" key="3">
    <source>
    </source>
</evidence>
<evidence type="ECO:0000269" key="4">
    <source>
    </source>
</evidence>
<evidence type="ECO:0000269" key="5">
    <source>
    </source>
</evidence>
<evidence type="ECO:0000269" key="6">
    <source>
    </source>
</evidence>
<evidence type="ECO:0000269" key="7">
    <source>
    </source>
</evidence>
<evidence type="ECO:0000303" key="8">
    <source>
    </source>
</evidence>
<evidence type="ECO:0000303" key="9">
    <source>
    </source>
</evidence>
<evidence type="ECO:0000303" key="10">
    <source>
    </source>
</evidence>
<evidence type="ECO:0000305" key="11"/>
<evidence type="ECO:0000312" key="12">
    <source>
        <dbReference type="Araport" id="AT5G56110"/>
    </source>
</evidence>
<evidence type="ECO:0000312" key="13">
    <source>
        <dbReference type="EMBL" id="BAB09293.1"/>
    </source>
</evidence>
<dbReference type="EMBL" id="AF048839">
    <property type="protein sequence ID" value="AAD40692.1"/>
    <property type="molecule type" value="Genomic_DNA"/>
</dbReference>
<dbReference type="EMBL" id="AY519639">
    <property type="protein sequence ID" value="AAS10109.1"/>
    <property type="molecule type" value="mRNA"/>
</dbReference>
<dbReference type="EMBL" id="AB011476">
    <property type="protein sequence ID" value="BAB09293.1"/>
    <property type="molecule type" value="Genomic_DNA"/>
</dbReference>
<dbReference type="EMBL" id="CP002688">
    <property type="protein sequence ID" value="AED96722.1"/>
    <property type="molecule type" value="Genomic_DNA"/>
</dbReference>
<dbReference type="EMBL" id="AB493793">
    <property type="protein sequence ID" value="BAH30631.1"/>
    <property type="molecule type" value="mRNA"/>
</dbReference>
<dbReference type="RefSeq" id="NP_200422.1">
    <property type="nucleotide sequence ID" value="NM_124993.1"/>
</dbReference>
<dbReference type="SMR" id="Q9XHV0"/>
<dbReference type="FunCoup" id="Q9XHV0">
    <property type="interactions" value="1"/>
</dbReference>
<dbReference type="STRING" id="3702.Q9XHV0"/>
<dbReference type="PaxDb" id="3702-AT5G56110.1"/>
<dbReference type="EnsemblPlants" id="AT5G56110.1">
    <property type="protein sequence ID" value="AT5G56110.1"/>
    <property type="gene ID" value="AT5G56110"/>
</dbReference>
<dbReference type="GeneID" id="835710"/>
<dbReference type="Gramene" id="AT5G56110.1">
    <property type="protein sequence ID" value="AT5G56110.1"/>
    <property type="gene ID" value="AT5G56110"/>
</dbReference>
<dbReference type="KEGG" id="ath:AT5G56110"/>
<dbReference type="Araport" id="AT5G56110"/>
<dbReference type="TAIR" id="AT5G56110">
    <property type="gene designation" value="MYB80"/>
</dbReference>
<dbReference type="eggNOG" id="KOG0048">
    <property type="taxonomic scope" value="Eukaryota"/>
</dbReference>
<dbReference type="HOGENOM" id="CLU_028567_17_2_1"/>
<dbReference type="InParanoid" id="Q9XHV0"/>
<dbReference type="OMA" id="GNDERNE"/>
<dbReference type="OrthoDB" id="2143914at2759"/>
<dbReference type="PRO" id="PR:Q9XHV0"/>
<dbReference type="Proteomes" id="UP000006548">
    <property type="component" value="Chromosome 5"/>
</dbReference>
<dbReference type="ExpressionAtlas" id="Q9XHV0">
    <property type="expression patterns" value="baseline and differential"/>
</dbReference>
<dbReference type="GO" id="GO:0005634">
    <property type="term" value="C:nucleus"/>
    <property type="evidence" value="ECO:0000314"/>
    <property type="project" value="TAIR"/>
</dbReference>
<dbReference type="GO" id="GO:0003682">
    <property type="term" value="F:chromatin binding"/>
    <property type="evidence" value="ECO:0000314"/>
    <property type="project" value="TAIR"/>
</dbReference>
<dbReference type="GO" id="GO:0003700">
    <property type="term" value="F:DNA-binding transcription factor activity"/>
    <property type="evidence" value="ECO:0000314"/>
    <property type="project" value="TAIR"/>
</dbReference>
<dbReference type="GO" id="GO:0043565">
    <property type="term" value="F:sequence-specific DNA binding"/>
    <property type="evidence" value="ECO:0000314"/>
    <property type="project" value="TAIR"/>
</dbReference>
<dbReference type="GO" id="GO:0048658">
    <property type="term" value="P:anther wall tapetum development"/>
    <property type="evidence" value="ECO:0000315"/>
    <property type="project" value="TAIR"/>
</dbReference>
<dbReference type="GO" id="GO:0009555">
    <property type="term" value="P:pollen development"/>
    <property type="evidence" value="ECO:0000316"/>
    <property type="project" value="TAIR"/>
</dbReference>
<dbReference type="GO" id="GO:0010090">
    <property type="term" value="P:trichome morphogenesis"/>
    <property type="evidence" value="ECO:0000315"/>
    <property type="project" value="TAIR"/>
</dbReference>
<dbReference type="CDD" id="cd00167">
    <property type="entry name" value="SANT"/>
    <property type="match status" value="2"/>
</dbReference>
<dbReference type="FunFam" id="1.10.10.60:FF:000204">
    <property type="entry name" value="transcription factor MYB80"/>
    <property type="match status" value="1"/>
</dbReference>
<dbReference type="FunFam" id="1.10.10.60:FF:000015">
    <property type="entry name" value="Transcription factor RAX3"/>
    <property type="match status" value="1"/>
</dbReference>
<dbReference type="Gene3D" id="1.10.10.60">
    <property type="entry name" value="Homeodomain-like"/>
    <property type="match status" value="2"/>
</dbReference>
<dbReference type="InterPro" id="IPR009057">
    <property type="entry name" value="Homeodomain-like_sf"/>
</dbReference>
<dbReference type="InterPro" id="IPR017930">
    <property type="entry name" value="Myb_dom"/>
</dbReference>
<dbReference type="InterPro" id="IPR015495">
    <property type="entry name" value="Myb_TF_plants"/>
</dbReference>
<dbReference type="InterPro" id="IPR001005">
    <property type="entry name" value="SANT/Myb"/>
</dbReference>
<dbReference type="PANTHER" id="PTHR47994">
    <property type="entry name" value="F14D16.11-RELATED"/>
    <property type="match status" value="1"/>
</dbReference>
<dbReference type="PANTHER" id="PTHR47994:SF2">
    <property type="entry name" value="TRANSCRIPTION FACTOR MYB80"/>
    <property type="match status" value="1"/>
</dbReference>
<dbReference type="Pfam" id="PF00249">
    <property type="entry name" value="Myb_DNA-binding"/>
    <property type="match status" value="2"/>
</dbReference>
<dbReference type="SMART" id="SM00717">
    <property type="entry name" value="SANT"/>
    <property type="match status" value="2"/>
</dbReference>
<dbReference type="SUPFAM" id="SSF46689">
    <property type="entry name" value="Homeodomain-like"/>
    <property type="match status" value="1"/>
</dbReference>
<dbReference type="PROSITE" id="PS51294">
    <property type="entry name" value="HTH_MYB"/>
    <property type="match status" value="2"/>
</dbReference>
<reference key="1">
    <citation type="journal article" date="1999" name="Plant Cell Physiol.">
        <title>A novel MYB-related gene from Arabidopsis thaliana expressed in developing anthers.</title>
        <authorList>
            <person name="Li S.F."/>
            <person name="Higginson T."/>
            <person name="Parish R.W."/>
        </authorList>
    </citation>
    <scope>NUCLEOTIDE SEQUENCE [GENOMIC DNA]</scope>
    <scope>TISSUE SPECIFICITY</scope>
    <source>
        <strain>cv. Landsberg erecta</strain>
    </source>
</reference>
<reference key="2">
    <citation type="submission" date="2004-01" db="EMBL/GenBank/DDBJ databases">
        <title>The MYB transcription factor family in Arabidopsis: a genome-wide cloning and expression pattern analysis.</title>
        <authorList>
            <person name="Qu L."/>
            <person name="Gu H."/>
        </authorList>
    </citation>
    <scope>NUCLEOTIDE SEQUENCE [MRNA]</scope>
</reference>
<reference key="3">
    <citation type="journal article" date="1998" name="DNA Res.">
        <title>Structural analysis of Arabidopsis thaliana chromosome 5. V. Sequence features of the regions of 1,381,565 bp covered by twenty one physically assigned P1 and TAC clones.</title>
        <authorList>
            <person name="Kaneko T."/>
            <person name="Kotani H."/>
            <person name="Nakamura Y."/>
            <person name="Sato S."/>
            <person name="Asamizu E."/>
            <person name="Miyajima N."/>
            <person name="Tabata S."/>
        </authorList>
    </citation>
    <scope>NUCLEOTIDE SEQUENCE [LARGE SCALE GENOMIC DNA]</scope>
    <source>
        <strain>cv. Columbia</strain>
    </source>
</reference>
<reference key="4">
    <citation type="journal article" date="2017" name="Plant J.">
        <title>Araport11: a complete reannotation of the Arabidopsis thaliana reference genome.</title>
        <authorList>
            <person name="Cheng C.Y."/>
            <person name="Krishnakumar V."/>
            <person name="Chan A.P."/>
            <person name="Thibaud-Nissen F."/>
            <person name="Schobel S."/>
            <person name="Town C.D."/>
        </authorList>
    </citation>
    <scope>GENOME REANNOTATION</scope>
    <source>
        <strain>cv. Columbia</strain>
    </source>
</reference>
<reference key="5">
    <citation type="submission" date="2009-03" db="EMBL/GenBank/DDBJ databases">
        <title>ORF cloning and analysis of Arabidopsis transcription factor genes.</title>
        <authorList>
            <person name="Fujita M."/>
            <person name="Mizukado S."/>
            <person name="Seki M."/>
            <person name="Shinozaki K."/>
            <person name="Mitsuda N."/>
            <person name="Takiguchi Y."/>
            <person name="Takagi M."/>
        </authorList>
    </citation>
    <scope>NUCLEOTIDE SEQUENCE [LARGE SCALE MRNA]</scope>
</reference>
<reference key="6">
    <citation type="journal article" date="2001" name="Curr. Opin. Plant Biol.">
        <title>The R2R3-MYB gene family in Arabidopsis thaliana.</title>
        <authorList>
            <person name="Stracke R."/>
            <person name="Werber M."/>
            <person name="Weisshaar B."/>
        </authorList>
    </citation>
    <scope>GENE FAMILY</scope>
    <scope>NOMENCLATURE</scope>
</reference>
<reference key="7">
    <citation type="journal article" date="2003" name="Plant J.">
        <title>AtMYB103 regulates tapetum and trichome development in Arabidopsis thaliana.</title>
        <authorList>
            <person name="Higginson T."/>
            <person name="Li S.F."/>
            <person name="Parish R.W."/>
        </authorList>
    </citation>
    <scope>FUNCTION</scope>
    <scope>TISSUE SPECIFICITY</scope>
</reference>
<reference key="8">
    <citation type="journal article" date="2007" name="Plant J.">
        <title>Transcription factor AtMYB103 is required for anther development by regulating tapetum development, callose dissolution and exine formation in Arabidopsis.</title>
        <authorList>
            <person name="Zhang Z.B."/>
            <person name="Zhu J."/>
            <person name="Gao J.F."/>
            <person name="Wang C."/>
            <person name="Li H."/>
            <person name="Li H."/>
            <person name="Zhang H.Q."/>
            <person name="Zhang S."/>
            <person name="Wang D.M."/>
            <person name="Wang Q.X."/>
            <person name="Huang H."/>
            <person name="Xia H.J."/>
            <person name="Yang Z.N."/>
        </authorList>
    </citation>
    <scope>FUNCTION</scope>
    <scope>SUBCELLULAR LOCATION</scope>
    <scope>DISRUPTION PHENOTYPE</scope>
    <scope>MUTAGENESIS OF PRO-41</scope>
</reference>
<reference key="9">
    <citation type="journal article" date="2011" name="J. Integr. Plant Biol.">
        <title>A genetic pathway for tapetum development and function in Arabidopsis.</title>
        <authorList>
            <person name="Zhu J."/>
            <person name="Lou Y."/>
            <person name="Xu X."/>
            <person name="Yang Z.N."/>
        </authorList>
    </citation>
    <scope>DEVELOPMENTAL STAGE</scope>
</reference>
<reference key="10">
    <citation type="journal article" date="2011" name="Plant Cell">
        <title>The MYB80 transcription factor is required for pollen development and the regulation of tapetal programmed cell death in Arabidopsis thaliana.</title>
        <authorList>
            <person name="Phan H.A."/>
            <person name="Iacuone S."/>
            <person name="Li S.F."/>
            <person name="Parish R.W."/>
        </authorList>
    </citation>
    <scope>FUNCTION</scope>
</reference>
<gene>
    <name evidence="9" type="primary">MYB80</name>
    <name evidence="10" type="synonym">MS188</name>
    <name evidence="8" type="synonym">MYB103</name>
    <name evidence="12" type="ordered locus">At5g56110</name>
    <name evidence="13" type="ORF">MDA7.17</name>
</gene>
<comment type="function">
    <text evidence="4 5 6">Transcription factor that binds to the DNA sequence 5'-CCAACC-3'. Regulates directly PME5, UND and GLOX1 (PubMed:21673079). Essential for tapetum development in anthers and microsporogenesis (PubMed:12848824, PubMed:21673079). Regulates the timing of tapetal programmed cell death (PCD) which is critical for pollen development. May act through the activation of UND, encoding an A1 aspartic protease (PubMed:21673079). Required for anther development by regulating tapetum development, callose dissolution and exine formation. Acts upstream of A6 and FAR2/MS2, two genes required for pollen exine formation (PubMed:17727613). Negatively regulates trichome endoreduplication and trichome branching (PubMed:12848824).</text>
</comment>
<comment type="subcellular location">
    <subcellularLocation>
        <location evidence="1 5">Nucleus</location>
    </subcellularLocation>
</comment>
<comment type="tissue specificity">
    <text evidence="3 4">Expressed in the tapetum and middle layer of developing anthers (PubMed:10353220). Expressed in trichomes (PubMed:12848824).</text>
</comment>
<comment type="developmental stage">
    <text evidence="7">During anther development, expressed from stage 4 to stage 6 in microsporocytes and tapetal cells. At the tetrad stage, expressed predominantly in tapetal cells. During microgametogenesis, expression decreases radically in the tapetum and microspores.</text>
</comment>
<comment type="disruption phenotype">
    <text evidence="5">Male sterility due to distorted pollen grains lacking reticulate exine on their surface.</text>
</comment>
<comment type="miscellaneous">
    <text evidence="4">Plants silencing MYB80 have the majority of pollen grains distorted in shape with reduced or no cytoplasmic content, display early tapetal degeneration with large opaque bodies in the tapetal cytoplasm, and trichomes on cauline and rosette leaves contain increased nuclear DNA content and produces additional branches.</text>
</comment>
<proteinExistence type="evidence at protein level"/>
<name>MYB80_ARATH</name>
<protein>
    <recommendedName>
        <fullName evidence="11">Transcription factor MYB80</fullName>
    </recommendedName>
    <alternativeName>
        <fullName evidence="8">MYB-related protein 103</fullName>
        <shortName evidence="8">AtMYB103</shortName>
    </alternativeName>
    <alternativeName>
        <fullName evidence="11">Myb-related protein 80</fullName>
        <shortName evidence="9">AtMYB80</shortName>
    </alternativeName>
    <alternativeName>
        <fullName evidence="10">Protein MALE STERILE 188</fullName>
    </alternativeName>
</protein>
<accession>Q9XHV0</accession>
<feature type="chain" id="PRO_0000436452" description="Transcription factor MYB80">
    <location>
        <begin position="1"/>
        <end position="320"/>
    </location>
</feature>
<feature type="domain" description="HTH myb-type 1" evidence="1">
    <location>
        <begin position="9"/>
        <end position="65"/>
    </location>
</feature>
<feature type="domain" description="HTH myb-type 2" evidence="1">
    <location>
        <begin position="66"/>
        <end position="116"/>
    </location>
</feature>
<feature type="DNA-binding region" description="H-T-H motif" evidence="1">
    <location>
        <begin position="37"/>
        <end position="61"/>
    </location>
</feature>
<feature type="DNA-binding region" description="H-T-H motif" evidence="1">
    <location>
        <begin position="89"/>
        <end position="112"/>
    </location>
</feature>
<feature type="region of interest" description="Disordered" evidence="2">
    <location>
        <begin position="257"/>
        <end position="283"/>
    </location>
</feature>
<feature type="compositionally biased region" description="Basic and acidic residues" evidence="2">
    <location>
        <begin position="263"/>
        <end position="272"/>
    </location>
</feature>
<feature type="mutagenesis site" description="In ms188-2; male sterility." evidence="5">
    <original>P</original>
    <variation>L</variation>
    <location>
        <position position="41"/>
    </location>
</feature>
<keyword id="KW-0217">Developmental protein</keyword>
<keyword id="KW-0238">DNA-binding</keyword>
<keyword id="KW-0539">Nucleus</keyword>
<keyword id="KW-1185">Reference proteome</keyword>
<keyword id="KW-0677">Repeat</keyword>
<keyword id="KW-0804">Transcription</keyword>
<keyword id="KW-0805">Transcription regulation</keyword>
<sequence>MGRIPCCEKENVKRGQWTPEEDNKLASYIAQHGTRNWRLIPKNAGLQRCGKSCRLRWTNYLRPDLKHGQFSEAEEHIIVKFHSVLGNRWSLIAAQLPGRTDNDVKNYWNTKLKKKLSGMGIDPVTHKPFSHLMAEITTTLNPPQVSHLAEAALGCFKDEMLHLLTKKRVDLNQINFSNHNPNPNNFHEIADNEAGKIKMDGLDHGNGIMKLWDMGNGFSYGSSSSSFGNEERNDGSASPAVAAWRGHGGIRTAVAETAAAEEEERRKLKGEVVDQEEIGSEGGRGDGMTMMRNHHHHQHVFNVDNVLWDLQADDLINHMV</sequence>